<dbReference type="EC" id="2.1.2.3" evidence="1"/>
<dbReference type="EC" id="3.5.4.10" evidence="1"/>
<dbReference type="EMBL" id="CP001359">
    <property type="protein sequence ID" value="ACL64831.1"/>
    <property type="molecule type" value="Genomic_DNA"/>
</dbReference>
<dbReference type="RefSeq" id="WP_012632772.1">
    <property type="nucleotide sequence ID" value="NC_011891.1"/>
</dbReference>
<dbReference type="SMR" id="B8JHC9"/>
<dbReference type="KEGG" id="acp:A2cp1_1487"/>
<dbReference type="HOGENOM" id="CLU_016316_5_2_7"/>
<dbReference type="UniPathway" id="UPA00074">
    <property type="reaction ID" value="UER00133"/>
</dbReference>
<dbReference type="UniPathway" id="UPA00074">
    <property type="reaction ID" value="UER00135"/>
</dbReference>
<dbReference type="Proteomes" id="UP000007089">
    <property type="component" value="Chromosome"/>
</dbReference>
<dbReference type="GO" id="GO:0005829">
    <property type="term" value="C:cytosol"/>
    <property type="evidence" value="ECO:0007669"/>
    <property type="project" value="TreeGrafter"/>
</dbReference>
<dbReference type="GO" id="GO:0003937">
    <property type="term" value="F:IMP cyclohydrolase activity"/>
    <property type="evidence" value="ECO:0007669"/>
    <property type="project" value="UniProtKB-UniRule"/>
</dbReference>
<dbReference type="GO" id="GO:0004643">
    <property type="term" value="F:phosphoribosylaminoimidazolecarboxamide formyltransferase activity"/>
    <property type="evidence" value="ECO:0007669"/>
    <property type="project" value="UniProtKB-UniRule"/>
</dbReference>
<dbReference type="GO" id="GO:0006189">
    <property type="term" value="P:'de novo' IMP biosynthetic process"/>
    <property type="evidence" value="ECO:0007669"/>
    <property type="project" value="UniProtKB-UniRule"/>
</dbReference>
<dbReference type="CDD" id="cd01421">
    <property type="entry name" value="IMPCH"/>
    <property type="match status" value="1"/>
</dbReference>
<dbReference type="FunFam" id="3.40.140.20:FF:000001">
    <property type="entry name" value="Bifunctional purine biosynthesis protein PurH"/>
    <property type="match status" value="1"/>
</dbReference>
<dbReference type="FunFam" id="3.40.50.1380:FF:000001">
    <property type="entry name" value="Bifunctional purine biosynthesis protein PurH"/>
    <property type="match status" value="1"/>
</dbReference>
<dbReference type="Gene3D" id="3.40.140.20">
    <property type="match status" value="2"/>
</dbReference>
<dbReference type="Gene3D" id="3.40.50.1380">
    <property type="entry name" value="Methylglyoxal synthase-like domain"/>
    <property type="match status" value="1"/>
</dbReference>
<dbReference type="HAMAP" id="MF_00139">
    <property type="entry name" value="PurH"/>
    <property type="match status" value="1"/>
</dbReference>
<dbReference type="InterPro" id="IPR024051">
    <property type="entry name" value="AICAR_Tfase_dup_dom_sf"/>
</dbReference>
<dbReference type="InterPro" id="IPR016193">
    <property type="entry name" value="Cytidine_deaminase-like"/>
</dbReference>
<dbReference type="InterPro" id="IPR011607">
    <property type="entry name" value="MGS-like_dom"/>
</dbReference>
<dbReference type="InterPro" id="IPR036914">
    <property type="entry name" value="MGS-like_dom_sf"/>
</dbReference>
<dbReference type="InterPro" id="IPR002695">
    <property type="entry name" value="PurH-like"/>
</dbReference>
<dbReference type="NCBIfam" id="NF002049">
    <property type="entry name" value="PRK00881.1"/>
    <property type="match status" value="1"/>
</dbReference>
<dbReference type="NCBIfam" id="TIGR00355">
    <property type="entry name" value="purH"/>
    <property type="match status" value="1"/>
</dbReference>
<dbReference type="PANTHER" id="PTHR11692:SF0">
    <property type="entry name" value="BIFUNCTIONAL PURINE BIOSYNTHESIS PROTEIN ATIC"/>
    <property type="match status" value="1"/>
</dbReference>
<dbReference type="PANTHER" id="PTHR11692">
    <property type="entry name" value="BIFUNCTIONAL PURINE BIOSYNTHESIS PROTEIN PURH"/>
    <property type="match status" value="1"/>
</dbReference>
<dbReference type="Pfam" id="PF01808">
    <property type="entry name" value="AICARFT_IMPCHas"/>
    <property type="match status" value="1"/>
</dbReference>
<dbReference type="Pfam" id="PF02142">
    <property type="entry name" value="MGS"/>
    <property type="match status" value="1"/>
</dbReference>
<dbReference type="PIRSF" id="PIRSF000414">
    <property type="entry name" value="AICARFT_IMPCHas"/>
    <property type="match status" value="1"/>
</dbReference>
<dbReference type="SMART" id="SM00798">
    <property type="entry name" value="AICARFT_IMPCHas"/>
    <property type="match status" value="1"/>
</dbReference>
<dbReference type="SMART" id="SM00851">
    <property type="entry name" value="MGS"/>
    <property type="match status" value="1"/>
</dbReference>
<dbReference type="SUPFAM" id="SSF53927">
    <property type="entry name" value="Cytidine deaminase-like"/>
    <property type="match status" value="1"/>
</dbReference>
<dbReference type="SUPFAM" id="SSF52335">
    <property type="entry name" value="Methylglyoxal synthase-like"/>
    <property type="match status" value="1"/>
</dbReference>
<dbReference type="PROSITE" id="PS51855">
    <property type="entry name" value="MGS"/>
    <property type="match status" value="1"/>
</dbReference>
<organism>
    <name type="scientific">Anaeromyxobacter dehalogenans (strain 2CP-1 / ATCC BAA-258)</name>
    <dbReference type="NCBI Taxonomy" id="455488"/>
    <lineage>
        <taxon>Bacteria</taxon>
        <taxon>Pseudomonadati</taxon>
        <taxon>Myxococcota</taxon>
        <taxon>Myxococcia</taxon>
        <taxon>Myxococcales</taxon>
        <taxon>Cystobacterineae</taxon>
        <taxon>Anaeromyxobacteraceae</taxon>
        <taxon>Anaeromyxobacter</taxon>
    </lineage>
</organism>
<reference key="1">
    <citation type="submission" date="2009-01" db="EMBL/GenBank/DDBJ databases">
        <title>Complete sequence of Anaeromyxobacter dehalogenans 2CP-1.</title>
        <authorList>
            <person name="Lucas S."/>
            <person name="Copeland A."/>
            <person name="Lapidus A."/>
            <person name="Glavina del Rio T."/>
            <person name="Dalin E."/>
            <person name="Tice H."/>
            <person name="Bruce D."/>
            <person name="Goodwin L."/>
            <person name="Pitluck S."/>
            <person name="Saunders E."/>
            <person name="Brettin T."/>
            <person name="Detter J.C."/>
            <person name="Han C."/>
            <person name="Larimer F."/>
            <person name="Land M."/>
            <person name="Hauser L."/>
            <person name="Kyrpides N."/>
            <person name="Ovchinnikova G."/>
            <person name="Beliaev A.S."/>
            <person name="Richardson P."/>
        </authorList>
    </citation>
    <scope>NUCLEOTIDE SEQUENCE [LARGE SCALE GENOMIC DNA]</scope>
    <source>
        <strain>2CP-1 / ATCC BAA-258</strain>
    </source>
</reference>
<proteinExistence type="inferred from homology"/>
<sequence>MTRRALVSVSDKTGLVPFARRLAALGVELLSTGGTQKALAEAGVPVVGVGDYTQAPEILGGRVKTLHPRVHGGILYRRGLASDEADVKARDIPPIDLVVVNLYPFREAVAAGKPFETCVEEIDIGGPTMVRSAAKNSAHVGVVVDPADYEKVAAELEATRTLSAATRFYLMKKAFAHTAAYDAAISEYLTAREAPEAAPAHFPATLAAVYTKAYDLRYGENPHQAGAFYRAAREPEEPSVAFADVLQGKELSYNNLLDLQAALAGVMEFDETACVIIKHNTPCGVSTGRTAGEAFARARECDPVSAFGGIVALNRPVDEATASELTSLFLECVIAPGYDAAARAALAVKKNLRLLEAPRLGAARATWRRRPEEGRELRSIPGGLLVMDRDLGSVRRDDCKVMTKRAPTEQEWKDLLFAWKVVKHVKSNAIVFAKDDRTVAIGGGQTSRVESVKTAVMKAALDVRGSSVGSDAFFPFADGVEEIIKAGATAIIQPGGSMRDAEVIAAADKAGIAMVATGMRHFRH</sequence>
<gene>
    <name evidence="1" type="primary">purH</name>
    <name type="ordered locus">A2cp1_1487</name>
</gene>
<accession>B8JHC9</accession>
<comment type="catalytic activity">
    <reaction evidence="1">
        <text>(6R)-10-formyltetrahydrofolate + 5-amino-1-(5-phospho-beta-D-ribosyl)imidazole-4-carboxamide = 5-formamido-1-(5-phospho-D-ribosyl)imidazole-4-carboxamide + (6S)-5,6,7,8-tetrahydrofolate</text>
        <dbReference type="Rhea" id="RHEA:22192"/>
        <dbReference type="ChEBI" id="CHEBI:57453"/>
        <dbReference type="ChEBI" id="CHEBI:58467"/>
        <dbReference type="ChEBI" id="CHEBI:58475"/>
        <dbReference type="ChEBI" id="CHEBI:195366"/>
        <dbReference type="EC" id="2.1.2.3"/>
    </reaction>
</comment>
<comment type="catalytic activity">
    <reaction evidence="1">
        <text>IMP + H2O = 5-formamido-1-(5-phospho-D-ribosyl)imidazole-4-carboxamide</text>
        <dbReference type="Rhea" id="RHEA:18445"/>
        <dbReference type="ChEBI" id="CHEBI:15377"/>
        <dbReference type="ChEBI" id="CHEBI:58053"/>
        <dbReference type="ChEBI" id="CHEBI:58467"/>
        <dbReference type="EC" id="3.5.4.10"/>
    </reaction>
</comment>
<comment type="pathway">
    <text evidence="1">Purine metabolism; IMP biosynthesis via de novo pathway; 5-formamido-1-(5-phospho-D-ribosyl)imidazole-4-carboxamide from 5-amino-1-(5-phospho-D-ribosyl)imidazole-4-carboxamide (10-formyl THF route): step 1/1.</text>
</comment>
<comment type="pathway">
    <text evidence="1">Purine metabolism; IMP biosynthesis via de novo pathway; IMP from 5-formamido-1-(5-phospho-D-ribosyl)imidazole-4-carboxamide: step 1/1.</text>
</comment>
<comment type="domain">
    <text evidence="1">The IMP cyclohydrolase activity resides in the N-terminal region.</text>
</comment>
<comment type="similarity">
    <text evidence="1">Belongs to the PurH family.</text>
</comment>
<evidence type="ECO:0000255" key="1">
    <source>
        <dbReference type="HAMAP-Rule" id="MF_00139"/>
    </source>
</evidence>
<evidence type="ECO:0000255" key="2">
    <source>
        <dbReference type="PROSITE-ProRule" id="PRU01202"/>
    </source>
</evidence>
<name>PUR9_ANAD2</name>
<feature type="chain" id="PRO_1000122942" description="Bifunctional purine biosynthesis protein PurH">
    <location>
        <begin position="1"/>
        <end position="524"/>
    </location>
</feature>
<feature type="domain" description="MGS-like" evidence="2">
    <location>
        <begin position="1"/>
        <end position="144"/>
    </location>
</feature>
<keyword id="KW-0378">Hydrolase</keyword>
<keyword id="KW-0511">Multifunctional enzyme</keyword>
<keyword id="KW-0658">Purine biosynthesis</keyword>
<keyword id="KW-0808">Transferase</keyword>
<protein>
    <recommendedName>
        <fullName evidence="1">Bifunctional purine biosynthesis protein PurH</fullName>
    </recommendedName>
    <domain>
        <recommendedName>
            <fullName evidence="1">Phosphoribosylaminoimidazolecarboxamide formyltransferase</fullName>
            <ecNumber evidence="1">2.1.2.3</ecNumber>
        </recommendedName>
        <alternativeName>
            <fullName evidence="1">AICAR transformylase</fullName>
        </alternativeName>
    </domain>
    <domain>
        <recommendedName>
            <fullName evidence="1">IMP cyclohydrolase</fullName>
            <ecNumber evidence="1">3.5.4.10</ecNumber>
        </recommendedName>
        <alternativeName>
            <fullName evidence="1">ATIC</fullName>
        </alternativeName>
        <alternativeName>
            <fullName evidence="1">IMP synthase</fullName>
        </alternativeName>
        <alternativeName>
            <fullName evidence="1">Inosinicase</fullName>
        </alternativeName>
    </domain>
</protein>